<proteinExistence type="inferred from homology"/>
<sequence length="134" mass="15562">MNTTLFRWPVRVYYEDTDAGGVVYHASYVAFYERARTEMLRHHHFSQQALMAERVAFVVRKMTVEYYAPARLDDMLEIQTEITSMRGTSLVFTQRIVNAENTLLNEAEVLVVCVDPLKMKPRALPKSIVAEFKQ</sequence>
<name>YBGC_ECO57</name>
<protein>
    <recommendedName>
        <fullName>Acyl-CoA thioester hydrolase YbgC</fullName>
        <shortName>Acyl-CoA thioesterase</shortName>
        <ecNumber>3.1.2.-</ecNumber>
    </recommendedName>
</protein>
<gene>
    <name type="primary">ybgC</name>
    <name type="ordered locus">Z0904</name>
    <name type="ordered locus">ECs0771</name>
</gene>
<dbReference type="EC" id="3.1.2.-"/>
<dbReference type="EMBL" id="AE005174">
    <property type="protein sequence ID" value="AAG55072.1"/>
    <property type="molecule type" value="Genomic_DNA"/>
</dbReference>
<dbReference type="EMBL" id="BA000007">
    <property type="protein sequence ID" value="BAB34194.1"/>
    <property type="molecule type" value="Genomic_DNA"/>
</dbReference>
<dbReference type="PIR" id="C90725">
    <property type="entry name" value="C90725"/>
</dbReference>
<dbReference type="PIR" id="D85576">
    <property type="entry name" value="D85576"/>
</dbReference>
<dbReference type="RefSeq" id="NP_308798.1">
    <property type="nucleotide sequence ID" value="NC_002695.1"/>
</dbReference>
<dbReference type="RefSeq" id="WP_001098384.1">
    <property type="nucleotide sequence ID" value="NZ_VOAI01000019.1"/>
</dbReference>
<dbReference type="SMR" id="P0A8Z5"/>
<dbReference type="STRING" id="155864.Z0904"/>
<dbReference type="GeneID" id="917501"/>
<dbReference type="GeneID" id="93776748"/>
<dbReference type="KEGG" id="ece:Z0904"/>
<dbReference type="KEGG" id="ecs:ECs_0771"/>
<dbReference type="PATRIC" id="fig|386585.9.peg.890"/>
<dbReference type="eggNOG" id="COG0824">
    <property type="taxonomic scope" value="Bacteria"/>
</dbReference>
<dbReference type="HOGENOM" id="CLU_101141_7_2_6"/>
<dbReference type="OMA" id="GDTDQMG"/>
<dbReference type="Proteomes" id="UP000000558">
    <property type="component" value="Chromosome"/>
</dbReference>
<dbReference type="Proteomes" id="UP000002519">
    <property type="component" value="Chromosome"/>
</dbReference>
<dbReference type="GO" id="GO:0005886">
    <property type="term" value="C:plasma membrane"/>
    <property type="evidence" value="ECO:0007669"/>
    <property type="project" value="UniProtKB-SubCell"/>
</dbReference>
<dbReference type="GO" id="GO:0047617">
    <property type="term" value="F:fatty acyl-CoA hydrolase activity"/>
    <property type="evidence" value="ECO:0007669"/>
    <property type="project" value="TreeGrafter"/>
</dbReference>
<dbReference type="GO" id="GO:0006629">
    <property type="term" value="P:lipid metabolic process"/>
    <property type="evidence" value="ECO:0007669"/>
    <property type="project" value="UniProtKB-KW"/>
</dbReference>
<dbReference type="CDD" id="cd00586">
    <property type="entry name" value="4HBT"/>
    <property type="match status" value="1"/>
</dbReference>
<dbReference type="FunFam" id="3.10.129.10:FF:000004">
    <property type="entry name" value="Tol-pal system-associated acyl-CoA thioesterase"/>
    <property type="match status" value="1"/>
</dbReference>
<dbReference type="Gene3D" id="3.10.129.10">
    <property type="entry name" value="Hotdog Thioesterase"/>
    <property type="match status" value="1"/>
</dbReference>
<dbReference type="InterPro" id="IPR050563">
    <property type="entry name" value="4-hydroxybenzoyl-CoA_TE"/>
</dbReference>
<dbReference type="InterPro" id="IPR008272">
    <property type="entry name" value="HB-CoA_thioesterase_AS"/>
</dbReference>
<dbReference type="InterPro" id="IPR029069">
    <property type="entry name" value="HotDog_dom_sf"/>
</dbReference>
<dbReference type="InterPro" id="IPR006683">
    <property type="entry name" value="Thioestr_dom"/>
</dbReference>
<dbReference type="InterPro" id="IPR014166">
    <property type="entry name" value="Tol-Pal_acyl-CoA_thioesterase"/>
</dbReference>
<dbReference type="InterPro" id="IPR006684">
    <property type="entry name" value="YbgC/YbaW"/>
</dbReference>
<dbReference type="NCBIfam" id="NF008065">
    <property type="entry name" value="PRK10800.1"/>
    <property type="match status" value="1"/>
</dbReference>
<dbReference type="NCBIfam" id="TIGR02799">
    <property type="entry name" value="thio_ybgC"/>
    <property type="match status" value="1"/>
</dbReference>
<dbReference type="NCBIfam" id="TIGR00051">
    <property type="entry name" value="YbgC/FadM family acyl-CoA thioesterase"/>
    <property type="match status" value="1"/>
</dbReference>
<dbReference type="PANTHER" id="PTHR31793">
    <property type="entry name" value="4-HYDROXYBENZOYL-COA THIOESTERASE FAMILY MEMBER"/>
    <property type="match status" value="1"/>
</dbReference>
<dbReference type="PANTHER" id="PTHR31793:SF37">
    <property type="entry name" value="ACYL-COA THIOESTER HYDROLASE YBGC"/>
    <property type="match status" value="1"/>
</dbReference>
<dbReference type="Pfam" id="PF03061">
    <property type="entry name" value="4HBT"/>
    <property type="match status" value="1"/>
</dbReference>
<dbReference type="PIRSF" id="PIRSF003230">
    <property type="entry name" value="YbgC"/>
    <property type="match status" value="1"/>
</dbReference>
<dbReference type="SUPFAM" id="SSF54637">
    <property type="entry name" value="Thioesterase/thiol ester dehydrase-isomerase"/>
    <property type="match status" value="1"/>
</dbReference>
<dbReference type="PROSITE" id="PS01328">
    <property type="entry name" value="4HBCOA_THIOESTERASE"/>
    <property type="match status" value="1"/>
</dbReference>
<organism>
    <name type="scientific">Escherichia coli O157:H7</name>
    <dbReference type="NCBI Taxonomy" id="83334"/>
    <lineage>
        <taxon>Bacteria</taxon>
        <taxon>Pseudomonadati</taxon>
        <taxon>Pseudomonadota</taxon>
        <taxon>Gammaproteobacteria</taxon>
        <taxon>Enterobacterales</taxon>
        <taxon>Enterobacteriaceae</taxon>
        <taxon>Escherichia</taxon>
    </lineage>
</organism>
<evidence type="ECO:0000250" key="1"/>
<evidence type="ECO:0000255" key="2">
    <source>
        <dbReference type="PROSITE-ProRule" id="PRU10041"/>
    </source>
</evidence>
<evidence type="ECO:0000305" key="3"/>
<comment type="function">
    <text evidence="1">Thioesterase that appears to be involved in phospholipid metabolism. Some specific acyl-ACPs could be physiological substrates. Displays acyl-CoA thioesterase activity on malonyl-CoA in vitro, catalyzing the hydrolysis of the thioester bond (By similarity).</text>
</comment>
<comment type="subcellular location">
    <subcellularLocation>
        <location evidence="1">Cell inner membrane</location>
        <topology evidence="1">Peripheral membrane protein</topology>
        <orientation evidence="1">Cytoplasmic side</orientation>
    </subcellularLocation>
</comment>
<comment type="similarity">
    <text evidence="3">Belongs to the 4-hydroxybenzoyl-CoA thioesterase family.</text>
</comment>
<reference key="1">
    <citation type="journal article" date="2001" name="Nature">
        <title>Genome sequence of enterohaemorrhagic Escherichia coli O157:H7.</title>
        <authorList>
            <person name="Perna N.T."/>
            <person name="Plunkett G. III"/>
            <person name="Burland V."/>
            <person name="Mau B."/>
            <person name="Glasner J.D."/>
            <person name="Rose D.J."/>
            <person name="Mayhew G.F."/>
            <person name="Evans P.S."/>
            <person name="Gregor J."/>
            <person name="Kirkpatrick H.A."/>
            <person name="Posfai G."/>
            <person name="Hackett J."/>
            <person name="Klink S."/>
            <person name="Boutin A."/>
            <person name="Shao Y."/>
            <person name="Miller L."/>
            <person name="Grotbeck E.J."/>
            <person name="Davis N.W."/>
            <person name="Lim A."/>
            <person name="Dimalanta E.T."/>
            <person name="Potamousis K."/>
            <person name="Apodaca J."/>
            <person name="Anantharaman T.S."/>
            <person name="Lin J."/>
            <person name="Yen G."/>
            <person name="Schwartz D.C."/>
            <person name="Welch R.A."/>
            <person name="Blattner F.R."/>
        </authorList>
    </citation>
    <scope>NUCLEOTIDE SEQUENCE [LARGE SCALE GENOMIC DNA]</scope>
    <source>
        <strain>O157:H7 / EDL933 / ATCC 700927 / EHEC</strain>
    </source>
</reference>
<reference key="2">
    <citation type="journal article" date="2001" name="DNA Res.">
        <title>Complete genome sequence of enterohemorrhagic Escherichia coli O157:H7 and genomic comparison with a laboratory strain K-12.</title>
        <authorList>
            <person name="Hayashi T."/>
            <person name="Makino K."/>
            <person name="Ohnishi M."/>
            <person name="Kurokawa K."/>
            <person name="Ishii K."/>
            <person name="Yokoyama K."/>
            <person name="Han C.-G."/>
            <person name="Ohtsubo E."/>
            <person name="Nakayama K."/>
            <person name="Murata T."/>
            <person name="Tanaka M."/>
            <person name="Tobe T."/>
            <person name="Iida T."/>
            <person name="Takami H."/>
            <person name="Honda T."/>
            <person name="Sasakawa C."/>
            <person name="Ogasawara N."/>
            <person name="Yasunaga T."/>
            <person name="Kuhara S."/>
            <person name="Shiba T."/>
            <person name="Hattori M."/>
            <person name="Shinagawa H."/>
        </authorList>
    </citation>
    <scope>NUCLEOTIDE SEQUENCE [LARGE SCALE GENOMIC DNA]</scope>
    <source>
        <strain>O157:H7 / Sakai / RIMD 0509952 / EHEC</strain>
    </source>
</reference>
<keyword id="KW-0997">Cell inner membrane</keyword>
<keyword id="KW-1003">Cell membrane</keyword>
<keyword id="KW-0378">Hydrolase</keyword>
<keyword id="KW-0443">Lipid metabolism</keyword>
<keyword id="KW-0472">Membrane</keyword>
<keyword id="KW-1185">Reference proteome</keyword>
<feature type="chain" id="PRO_0000087763" description="Acyl-CoA thioester hydrolase YbgC">
    <location>
        <begin position="1"/>
        <end position="134"/>
    </location>
</feature>
<feature type="active site" evidence="2">
    <location>
        <position position="18"/>
    </location>
</feature>
<accession>P0A8Z5</accession>
<accession>P08999</accession>